<organism>
    <name type="scientific">Measles virus (strain Ichinose-B95a)</name>
    <name type="common">MeV</name>
    <name type="synonym">Subacute sclerose panencephalitis virus</name>
    <dbReference type="NCBI Taxonomy" id="645098"/>
    <lineage>
        <taxon>Viruses</taxon>
        <taxon>Riboviria</taxon>
        <taxon>Orthornavirae</taxon>
        <taxon>Negarnaviricota</taxon>
        <taxon>Haploviricotina</taxon>
        <taxon>Monjiviricetes</taxon>
        <taxon>Mononegavirales</taxon>
        <taxon>Paramyxoviridae</taxon>
        <taxon>Orthoparamyxovirinae</taxon>
        <taxon>Morbillivirus</taxon>
        <taxon>Morbillivirus hominis</taxon>
        <taxon>Measles morbillivirus</taxon>
    </lineage>
</organism>
<dbReference type="EMBL" id="AB016162">
    <property type="protein sequence ID" value="BAA34977.1"/>
    <property type="molecule type" value="Genomic_RNA"/>
</dbReference>
<dbReference type="RefSeq" id="NP_056918.1">
    <property type="nucleotide sequence ID" value="NC_001498.1"/>
</dbReference>
<dbReference type="SMR" id="Q9WMB5"/>
<dbReference type="IntAct" id="Q9WMB5">
    <property type="interactions" value="13"/>
</dbReference>
<dbReference type="GeneID" id="1489804"/>
<dbReference type="KEGG" id="vg:1489804"/>
<dbReference type="Proteomes" id="UP000008699">
    <property type="component" value="Segment"/>
</dbReference>
<dbReference type="GO" id="GO:0019029">
    <property type="term" value="C:helical viral capsid"/>
    <property type="evidence" value="ECO:0007669"/>
    <property type="project" value="UniProtKB-KW"/>
</dbReference>
<dbReference type="GO" id="GO:0030430">
    <property type="term" value="C:host cell cytoplasm"/>
    <property type="evidence" value="ECO:0007669"/>
    <property type="project" value="UniProtKB-SubCell"/>
</dbReference>
<dbReference type="GO" id="GO:0042025">
    <property type="term" value="C:host cell nucleus"/>
    <property type="evidence" value="ECO:0007669"/>
    <property type="project" value="UniProtKB-SubCell"/>
</dbReference>
<dbReference type="GO" id="GO:1990904">
    <property type="term" value="C:ribonucleoprotein complex"/>
    <property type="evidence" value="ECO:0007669"/>
    <property type="project" value="UniProtKB-KW"/>
</dbReference>
<dbReference type="GO" id="GO:0019013">
    <property type="term" value="C:viral nucleocapsid"/>
    <property type="evidence" value="ECO:0007669"/>
    <property type="project" value="UniProtKB-KW"/>
</dbReference>
<dbReference type="GO" id="GO:0003723">
    <property type="term" value="F:RNA binding"/>
    <property type="evidence" value="ECO:0007669"/>
    <property type="project" value="UniProtKB-KW"/>
</dbReference>
<dbReference type="GO" id="GO:0005198">
    <property type="term" value="F:structural molecule activity"/>
    <property type="evidence" value="ECO:0007669"/>
    <property type="project" value="InterPro"/>
</dbReference>
<dbReference type="InterPro" id="IPR002021">
    <property type="entry name" value="Paramyx_ncap"/>
</dbReference>
<dbReference type="Pfam" id="PF00973">
    <property type="entry name" value="Paramyxo_ncap"/>
    <property type="match status" value="1"/>
</dbReference>
<comment type="function">
    <text evidence="3 4 5 7 8 10 14">Forms the helical nucleocapsid (NC) in a ratio of 1 N per 6 ribonucleotides, protecting the genome from nucleases (By similarity). The nucleocapsid (NC) has a helical structure with either 12.35 or 11.64 N per turn, approximately 20 nm in diameter, with a hollow central cavity approximately 5 nm in diameter (By similarity). The encapsidated genomic RNA serves as template for transcription and replication; encapsidation by N is coupled to RNA synthesis (By similarity). Forms the encapsidation complex with the phosphoprotein protein P. Before encapsidation, the newly synthesized free N protein, so-called N0, is chaperoned by P (PubMed:12573586). Participates, together with P, in the formation of viral factories (viroplasms), which are large inclusions in the host cytoplasm where replication takes place (PubMed:32270045). N is released in the blood following lysis of measles infected cells, it interacts then with human FCGR2B on immune cells, inducing apoptosis and blocking inflammatory immune response (By similarity).</text>
</comment>
<comment type="subunit">
    <text evidence="1 6 7 8 12 14 18 19">Homomultimer; forms the nucleocapsid (By similarity). Binds to viral genomic RNA (By similarity). N0 interacts (via Ncore) with the phosphoprotein (via N-terminus); this interaction allows P to chaperon N0 to avoid N polymerization and non-specific RNA binding before encapsidation (Probable). Interacts (via the Ntail) as N-RNA template with the phosphoprotein (via C-terminus XD); this interaction maintains the P/L complex anchored to the nucleocapsid template during the sequential transcription (Probable). Interacts with the phosphoprotein; this interaction leads to the formation of membraneless organelles that function as viral replication factories (By similarity). Interacts with human FCGR2B protein (By similarity). Interacts with human PPIA/CYPA and PPIB/CYPB (PubMed:20147391).</text>
</comment>
<comment type="subcellular location">
    <subcellularLocation>
        <location evidence="17">Virion</location>
    </subcellularLocation>
    <subcellularLocation>
        <location evidence="12">Host cytoplasm</location>
    </subcellularLocation>
    <subcellularLocation>
        <location evidence="2">Host nucleus</location>
    </subcellularLocation>
</comment>
<comment type="domain">
    <text evidence="8">Ncore is globular and carries regions required for N self-assembly and RNA-binding. Ntail is an intrinsically disordered monomeric domain in the C-terminus.</text>
</comment>
<comment type="PTM">
    <text evidence="13">Phosphorylation at Thr-279 is required for the formation of the nucleocapsid.</text>
</comment>
<comment type="similarity">
    <text evidence="17">Belongs to the paramyxoviruses nucleocapsid family.</text>
</comment>
<proteinExistence type="evidence at protein level"/>
<feature type="chain" id="PRO_0000394713" description="Nucleoprotein">
    <location>
        <begin position="1"/>
        <end position="525"/>
    </location>
</feature>
<feature type="region of interest" description="Ncore" evidence="16">
    <location>
        <begin position="1"/>
        <end position="403"/>
    </location>
</feature>
<feature type="region of interest" description="RNA packaging and organization of the helical nucleocapsid" evidence="8">
    <location>
        <begin position="1"/>
        <end position="375"/>
    </location>
</feature>
<feature type="region of interest" description="Homomultimerization" evidence="5">
    <location>
        <begin position="1"/>
        <end position="36"/>
    </location>
</feature>
<feature type="region of interest" description="Homomultimerization" evidence="5">
    <location>
        <begin position="373"/>
        <end position="391"/>
    </location>
</feature>
<feature type="region of interest" description="Ntail" evidence="16">
    <location>
        <begin position="404"/>
        <end position="525"/>
    </location>
</feature>
<feature type="region of interest" description="Disordered" evidence="9">
    <location>
        <begin position="418"/>
        <end position="525"/>
    </location>
</feature>
<feature type="region of interest" description="Interaction with the phosphoprotein" evidence="7">
    <location>
        <begin position="477"/>
        <end position="505"/>
    </location>
</feature>
<feature type="short sequence motif" description="Nuclear localization signal" evidence="2">
    <location>
        <begin position="70"/>
        <end position="77"/>
    </location>
</feature>
<feature type="short sequence motif" description="Nuclear export signal" evidence="2">
    <location>
        <begin position="425"/>
        <end position="440"/>
    </location>
</feature>
<feature type="compositionally biased region" description="Basic and acidic residues" evidence="9">
    <location>
        <begin position="434"/>
        <end position="452"/>
    </location>
</feature>
<feature type="binding site" evidence="7">
    <location>
        <position position="180"/>
    </location>
    <ligand>
        <name>RNA</name>
        <dbReference type="ChEBI" id="CHEBI:33697"/>
    </ligand>
</feature>
<feature type="binding site" evidence="7">
    <location>
        <position position="195"/>
    </location>
    <ligand>
        <name>RNA</name>
        <dbReference type="ChEBI" id="CHEBI:33697"/>
    </ligand>
</feature>
<feature type="binding site" evidence="7">
    <location>
        <position position="202"/>
    </location>
    <ligand>
        <name>RNA</name>
        <dbReference type="ChEBI" id="CHEBI:33697"/>
    </ligand>
</feature>
<feature type="binding site" evidence="7">
    <location>
        <position position="260"/>
    </location>
    <ligand>
        <name>RNA</name>
        <dbReference type="ChEBI" id="CHEBI:33697"/>
    </ligand>
</feature>
<feature type="binding site" evidence="7">
    <location>
        <position position="351"/>
    </location>
    <ligand>
        <name>RNA</name>
        <dbReference type="ChEBI" id="CHEBI:33697"/>
    </ligand>
</feature>
<feature type="modified residue" description="Phosphothreonine; by host" evidence="13">
    <location>
        <position position="279"/>
    </location>
</feature>
<feature type="modified residue" description="Phosphoserine; by host PIM3" evidence="13">
    <location>
        <position position="479"/>
    </location>
</feature>
<feature type="modified residue" description="Phosphoserine; by host PIM3" evidence="13">
    <location>
        <position position="510"/>
    </location>
</feature>
<feature type="mutagenesis site" description="Loss of encapsidation of viral RNA, but no effect on N-P interaction." evidence="13">
    <original>T</original>
    <variation>A</variation>
    <location>
        <position position="279"/>
    </location>
</feature>
<feature type="mutagenesis site" description="Drastic loss of N phosphorylation, but no effect on N-P interaction; when associated with A-510." evidence="11 15">
    <original>S</original>
    <variation>A</variation>
    <location>
        <position position="479"/>
    </location>
</feature>
<feature type="mutagenesis site" description="Drastic loss of N phosphorylation, but no effect on N-P interaction; when associated with A-479." evidence="11 15">
    <original>S</original>
    <variation>A</variation>
    <location>
        <position position="510"/>
    </location>
</feature>
<name>NCAP_MEASC</name>
<keyword id="KW-0167">Capsid protein</keyword>
<keyword id="KW-1139">Helical capsid protein</keyword>
<keyword id="KW-1035">Host cytoplasm</keyword>
<keyword id="KW-1048">Host nucleus</keyword>
<keyword id="KW-0945">Host-virus interaction</keyword>
<keyword id="KW-0597">Phosphoprotein</keyword>
<keyword id="KW-1185">Reference proteome</keyword>
<keyword id="KW-0687">Ribonucleoprotein</keyword>
<keyword id="KW-0694">RNA-binding</keyword>
<keyword id="KW-0543">Viral nucleoprotein</keyword>
<keyword id="KW-0946">Virion</keyword>
<reference key="1">
    <citation type="journal article" date="2000" name="Virus Genes">
        <title>Comparative nucleotide sequence analyses of the entire genomes of B95a cell-isolated and vero cell-isolated measles viruses from the same patient.</title>
        <authorList>
            <person name="Takeuchi K."/>
            <person name="Miyajima N."/>
            <person name="Kobune F."/>
            <person name="Tashiro M."/>
        </authorList>
    </citation>
    <scope>NUCLEOTIDE SEQUENCE [GENOMIC RNA]</scope>
</reference>
<reference key="2">
    <citation type="journal article" date="2003" name="Virology">
        <title>Isolation and characterisation of the rabies virus N degrees-P complex produced in insect cells.</title>
        <authorList>
            <person name="Mavrakis M."/>
            <person name="Iseni F."/>
            <person name="Mazza C."/>
            <person name="Schoehn G."/>
            <person name="Ebel C."/>
            <person name="Gentzel M."/>
            <person name="Franz T."/>
            <person name="Ruigrok R.W."/>
        </authorList>
    </citation>
    <scope>INTERACTION WITH THE PHOSPHOPROTEIN</scope>
    <scope>FUNCTION</scope>
</reference>
<reference key="3">
    <citation type="journal article" date="2010" name="J. Virol.">
        <title>CD147/EMMPRIN acts as a functional entry receptor for measles virus on epithelial cells.</title>
        <authorList>
            <person name="Watanabe A."/>
            <person name="Yoneda M."/>
            <person name="Ikeda F."/>
            <person name="Terao-Muto Y."/>
            <person name="Sato H."/>
            <person name="Kai C."/>
        </authorList>
    </citation>
    <scope>INTERACTION WITH HUMAN PPIA AND PPIB</scope>
    <scope>SUBCELLULAR LOCATION</scope>
</reference>
<reference key="4">
    <citation type="journal article" date="2008" name="Proteomics">
        <title>Phosphorylation of measles virus nucleoprotein upregulates the transcriptional activity of minigenomic RNA.</title>
        <authorList>
            <person name="Hagiwara K."/>
            <person name="Sato H."/>
            <person name="Inoue Y."/>
            <person name="Watanabe A."/>
            <person name="Yoneda M."/>
            <person name="Ikeda F."/>
            <person name="Fujita K."/>
            <person name="Fukuda H."/>
            <person name="Takamura C."/>
            <person name="Kozuka-Hata H."/>
            <person name="Oyama M."/>
            <person name="Sugano S."/>
            <person name="Ohmi S."/>
            <person name="Kai C."/>
        </authorList>
    </citation>
    <scope>PHOSPHORYLATION AT SER-479 AND SER-510</scope>
    <scope>IDENTIFICATION BY MASS SPECTROMETRY</scope>
    <scope>MUTAGENESIS OF SER-479 AND SER-510</scope>
    <source>
        <strain>HL</strain>
    </source>
</reference>
<reference key="5">
    <citation type="journal article" date="2014" name="J. Virol.">
        <title>Newly identified minor phosphorylation site threonine-279 of measles virus nucleoprotein is a prerequisite for nucleocapsid formation.</title>
        <authorList>
            <person name="Sugai A."/>
            <person name="Sato H."/>
            <person name="Hagiwara K."/>
            <person name="Kozuka-Hata H."/>
            <person name="Oyama M."/>
            <person name="Yoneda M."/>
            <person name="Kai C."/>
        </authorList>
    </citation>
    <scope>PHOSPHORYLATION AT THR-279</scope>
    <scope>MUTAGENESIS OF THR-279</scope>
    <source>
        <strain>HL</strain>
    </source>
</reference>
<reference key="6">
    <citation type="journal article" date="2020" name="Biochem. Biophys. Res. Commun.">
        <title>PIM 3 kinase, a proto-oncogene product, regulates phosphorylation of the measles virus nucleoprotein tail domain at Ser 479 and Ser 510.</title>
        <authorList>
            <person name="Sugai A."/>
            <person name="Sato H."/>
            <person name="Yoneda M."/>
            <person name="Kai C."/>
        </authorList>
    </citation>
    <scope>PHOSPHORYLATION AT SER-479 AND SER-510</scope>
    <source>
        <strain>HL</strain>
    </source>
</reference>
<reference key="7">
    <citation type="journal article" date="2020" name="Sci. Adv.">
        <title>Measles virus nucleo- and phosphoproteins form liquid-like phase-separated compartments that promote nucleocapsid assembly.</title>
        <authorList>
            <person name="Guseva S."/>
            <person name="Milles S."/>
            <person name="Jensen M.R."/>
            <person name="Salvi N."/>
            <person name="Kleman J.P."/>
            <person name="Maurin D."/>
            <person name="Ruigrok R.W.H."/>
            <person name="Blackledge M."/>
        </authorList>
    </citation>
    <scope>INTERACTION WITH THE PHOSPHOPROTEIN</scope>
    <scope>FUNCTION</scope>
</reference>
<reference key="8">
    <citation type="journal article" date="2019" name="Front. Microbiol.">
        <title>The Nucleoprotein and Phosphoprotein of Measles Virus.</title>
        <authorList>
            <person name="Guseva S."/>
            <person name="Milles S."/>
            <person name="Blackledge M."/>
            <person name="Ruigrok R.W.H."/>
        </authorList>
    </citation>
    <scope>REVIEW</scope>
    <scope>DOMAIN</scope>
</reference>
<protein>
    <recommendedName>
        <fullName>Nucleoprotein</fullName>
    </recommendedName>
    <alternativeName>
        <fullName>Nucleocapsid protein</fullName>
        <shortName>NP</shortName>
        <shortName>Protein N</shortName>
    </alternativeName>
</protein>
<accession>Q9WMB5</accession>
<organismHost>
    <name type="scientific">Homo sapiens</name>
    <name type="common">Human</name>
    <dbReference type="NCBI Taxonomy" id="9606"/>
</organismHost>
<evidence type="ECO:0000250" key="1">
    <source>
        <dbReference type="UniProtKB" id="O57286"/>
    </source>
</evidence>
<evidence type="ECO:0000250" key="2">
    <source>
        <dbReference type="UniProtKB" id="P04851"/>
    </source>
</evidence>
<evidence type="ECO:0000250" key="3">
    <source>
        <dbReference type="UniProtKB" id="P06159"/>
    </source>
</evidence>
<evidence type="ECO:0000250" key="4">
    <source>
        <dbReference type="UniProtKB" id="P0DXN6"/>
    </source>
</evidence>
<evidence type="ECO:0000250" key="5">
    <source>
        <dbReference type="UniProtKB" id="P10050"/>
    </source>
</evidence>
<evidence type="ECO:0000250" key="6">
    <source>
        <dbReference type="UniProtKB" id="Q07097"/>
    </source>
</evidence>
<evidence type="ECO:0000250" key="7">
    <source>
        <dbReference type="UniProtKB" id="Q77M43"/>
    </source>
</evidence>
<evidence type="ECO:0000250" key="8">
    <source>
        <dbReference type="UniProtKB" id="Q89933"/>
    </source>
</evidence>
<evidence type="ECO:0000256" key="9">
    <source>
        <dbReference type="SAM" id="MobiDB-lite"/>
    </source>
</evidence>
<evidence type="ECO:0000269" key="10">
    <source>
    </source>
</evidence>
<evidence type="ECO:0000269" key="11">
    <source>
    </source>
</evidence>
<evidence type="ECO:0000269" key="12">
    <source>
    </source>
</evidence>
<evidence type="ECO:0000269" key="13">
    <source>
    </source>
</evidence>
<evidence type="ECO:0000269" key="14">
    <source>
    </source>
</evidence>
<evidence type="ECO:0000269" key="15">
    <source>
    </source>
</evidence>
<evidence type="ECO:0000303" key="16">
    <source>
    </source>
</evidence>
<evidence type="ECO:0000305" key="17"/>
<evidence type="ECO:0000305" key="18">
    <source>
    </source>
</evidence>
<evidence type="ECO:0000305" key="19">
    <source>
    </source>
</evidence>
<sequence>MATLLRSLALFKRNKDKPPITSGSGGAIRGIKHIIIVPIPGDSSITTRSRLLDRLVRLIGNPDVSGPKLTGALIGILSLFVESPGQLIQRITDDPDVSIRLLEVVQSDQSQSGLTFASRGTNMEDEADQYFSHDDPSSSDQSRSGWFENKEISDIEVQDPEGFNMILGTILAQIWVLLAKAVTAPDTAADSELRRWIKYTQQRRVVGEFRLERKWLDVVRNRIAEDLSLRRFMVALILDIKRTPGNKPRIAEMICDIDTYIVEAGLASFILTIKFGIETMYPALGLHEFAGELSTLESLMNLYQQMGETAPYMVILENSIQNKFSAGSYPLLWSYAMGVGVELENSMGGLNFGRSYFDPAYFRLGQEMVRRSAGKVSSTLASELGITAEDARLVSEIAMHTTEDRISRAVGPRQAQVSFLHGDQSENELPGLGGKEDRRVKQGRGEARESYRETGSSRASDARAAHPPTSMPLDIDTASESGQDPQDSRRSADALLRLQAMAGILEEQGSDTDTPRVYNDRDLLD</sequence>
<gene>
    <name type="primary">N</name>
    <name type="synonym">NP</name>
</gene>